<proteinExistence type="inferred from homology"/>
<gene>
    <name evidence="1" type="primary">dnaA</name>
    <name type="ordered locus">cauri_0001</name>
</gene>
<protein>
    <recommendedName>
        <fullName evidence="1">Chromosomal replication initiator protein DnaA</fullName>
    </recommendedName>
</protein>
<comment type="function">
    <text evidence="1">Plays an essential role in the initiation and regulation of chromosomal replication. ATP-DnaA binds to the origin of replication (oriC) to initiate formation of the DNA replication initiation complex once per cell cycle. Binds the DnaA box (a 9 base pair repeat at the origin) and separates the double-stranded (ds)DNA. Forms a right-handed helical filament on oriC DNA; dsDNA binds to the exterior of the filament while single-stranded (ss)DNA is stabiized in the filament's interior. The ATP-DnaA-oriC complex binds and stabilizes one strand of the AT-rich DNA unwinding element (DUE), permitting loading of DNA polymerase. After initiation quickly degrades to an ADP-DnaA complex that is not apt for DNA replication. Binds acidic phospholipids.</text>
</comment>
<comment type="subunit">
    <text evidence="1">Oligomerizes as a right-handed, spiral filament on DNA at oriC.</text>
</comment>
<comment type="subcellular location">
    <subcellularLocation>
        <location evidence="1">Cytoplasm</location>
    </subcellularLocation>
</comment>
<comment type="domain">
    <text evidence="1">Domain I is involved in oligomerization and binding regulators, domain II is flexibile and of varying length in different bacteria, domain III forms the AAA+ region, while domain IV binds dsDNA.</text>
</comment>
<comment type="similarity">
    <text evidence="1">Belongs to the DnaA family.</text>
</comment>
<reference key="1">
    <citation type="journal article" date="2010" name="BMC Genomics">
        <title>Complete genome sequence and lifestyle of black-pigmented Corynebacterium aurimucosum ATCC 700975 (formerly C. nigricans CN-1) isolated from a vaginal swab of a woman with spontaneous abortion.</title>
        <authorList>
            <person name="Trost E."/>
            <person name="Gotker S."/>
            <person name="Schneider J."/>
            <person name="Schneiker-Bekel S."/>
            <person name="Szczepanowski R."/>
            <person name="Tilker A."/>
            <person name="Viehoever P."/>
            <person name="Arnold W."/>
            <person name="Bekel T."/>
            <person name="Blom J."/>
            <person name="Gartemann K.H."/>
            <person name="Linke B."/>
            <person name="Goesmann A."/>
            <person name="Puhler A."/>
            <person name="Shukla S.K."/>
            <person name="Tauch A."/>
        </authorList>
    </citation>
    <scope>NUCLEOTIDE SEQUENCE [LARGE SCALE GENOMIC DNA]</scope>
    <source>
        <strain>ATCC 700975 / DSM 44827 / CIP 107346 / CN-1</strain>
    </source>
</reference>
<name>DNAA_CORA7</name>
<dbReference type="EMBL" id="CP001601">
    <property type="protein sequence ID" value="ACP31600.1"/>
    <property type="molecule type" value="Genomic_DNA"/>
</dbReference>
<dbReference type="RefSeq" id="WP_010188097.1">
    <property type="nucleotide sequence ID" value="NC_012590.1"/>
</dbReference>
<dbReference type="SMR" id="C3PE72"/>
<dbReference type="STRING" id="548476.cauri_0001"/>
<dbReference type="GeneID" id="31922627"/>
<dbReference type="KEGG" id="car:cauri_0001"/>
<dbReference type="eggNOG" id="COG0593">
    <property type="taxonomic scope" value="Bacteria"/>
</dbReference>
<dbReference type="HOGENOM" id="CLU_026910_2_1_11"/>
<dbReference type="OrthoDB" id="9807019at2"/>
<dbReference type="Proteomes" id="UP000002077">
    <property type="component" value="Chromosome"/>
</dbReference>
<dbReference type="GO" id="GO:0005737">
    <property type="term" value="C:cytoplasm"/>
    <property type="evidence" value="ECO:0007669"/>
    <property type="project" value="UniProtKB-SubCell"/>
</dbReference>
<dbReference type="GO" id="GO:0005886">
    <property type="term" value="C:plasma membrane"/>
    <property type="evidence" value="ECO:0007669"/>
    <property type="project" value="TreeGrafter"/>
</dbReference>
<dbReference type="GO" id="GO:0005524">
    <property type="term" value="F:ATP binding"/>
    <property type="evidence" value="ECO:0007669"/>
    <property type="project" value="UniProtKB-UniRule"/>
</dbReference>
<dbReference type="GO" id="GO:0016887">
    <property type="term" value="F:ATP hydrolysis activity"/>
    <property type="evidence" value="ECO:0007669"/>
    <property type="project" value="InterPro"/>
</dbReference>
<dbReference type="GO" id="GO:0003688">
    <property type="term" value="F:DNA replication origin binding"/>
    <property type="evidence" value="ECO:0007669"/>
    <property type="project" value="UniProtKB-UniRule"/>
</dbReference>
<dbReference type="GO" id="GO:0008289">
    <property type="term" value="F:lipid binding"/>
    <property type="evidence" value="ECO:0007669"/>
    <property type="project" value="UniProtKB-KW"/>
</dbReference>
<dbReference type="GO" id="GO:0006270">
    <property type="term" value="P:DNA replication initiation"/>
    <property type="evidence" value="ECO:0007669"/>
    <property type="project" value="UniProtKB-UniRule"/>
</dbReference>
<dbReference type="GO" id="GO:0006275">
    <property type="term" value="P:regulation of DNA replication"/>
    <property type="evidence" value="ECO:0007669"/>
    <property type="project" value="UniProtKB-UniRule"/>
</dbReference>
<dbReference type="CDD" id="cd00009">
    <property type="entry name" value="AAA"/>
    <property type="match status" value="1"/>
</dbReference>
<dbReference type="CDD" id="cd06571">
    <property type="entry name" value="Bac_DnaA_C"/>
    <property type="match status" value="1"/>
</dbReference>
<dbReference type="FunFam" id="1.10.1750.10:FF:000002">
    <property type="entry name" value="Chromosomal replication initiator protein DnaA"/>
    <property type="match status" value="1"/>
</dbReference>
<dbReference type="FunFam" id="1.10.8.60:FF:000003">
    <property type="entry name" value="Chromosomal replication initiator protein DnaA"/>
    <property type="match status" value="1"/>
</dbReference>
<dbReference type="FunFam" id="3.40.50.300:FF:000150">
    <property type="entry name" value="Chromosomal replication initiator protein DnaA"/>
    <property type="match status" value="1"/>
</dbReference>
<dbReference type="Gene3D" id="1.10.1750.10">
    <property type="match status" value="1"/>
</dbReference>
<dbReference type="Gene3D" id="1.10.8.60">
    <property type="match status" value="1"/>
</dbReference>
<dbReference type="Gene3D" id="3.40.50.300">
    <property type="entry name" value="P-loop containing nucleotide triphosphate hydrolases"/>
    <property type="match status" value="1"/>
</dbReference>
<dbReference type="HAMAP" id="MF_00377">
    <property type="entry name" value="DnaA_bact"/>
    <property type="match status" value="1"/>
</dbReference>
<dbReference type="InterPro" id="IPR003593">
    <property type="entry name" value="AAA+_ATPase"/>
</dbReference>
<dbReference type="InterPro" id="IPR001957">
    <property type="entry name" value="Chromosome_initiator_DnaA"/>
</dbReference>
<dbReference type="InterPro" id="IPR020591">
    <property type="entry name" value="Chromosome_initiator_DnaA-like"/>
</dbReference>
<dbReference type="InterPro" id="IPR018312">
    <property type="entry name" value="Chromosome_initiator_DnaA_CS"/>
</dbReference>
<dbReference type="InterPro" id="IPR013159">
    <property type="entry name" value="DnaA_C"/>
</dbReference>
<dbReference type="InterPro" id="IPR013317">
    <property type="entry name" value="DnaA_dom"/>
</dbReference>
<dbReference type="InterPro" id="IPR027417">
    <property type="entry name" value="P-loop_NTPase"/>
</dbReference>
<dbReference type="InterPro" id="IPR010921">
    <property type="entry name" value="Trp_repressor/repl_initiator"/>
</dbReference>
<dbReference type="NCBIfam" id="TIGR00362">
    <property type="entry name" value="DnaA"/>
    <property type="match status" value="1"/>
</dbReference>
<dbReference type="NCBIfam" id="NF010686">
    <property type="entry name" value="PRK14086.1"/>
    <property type="match status" value="1"/>
</dbReference>
<dbReference type="PANTHER" id="PTHR30050">
    <property type="entry name" value="CHROMOSOMAL REPLICATION INITIATOR PROTEIN DNAA"/>
    <property type="match status" value="1"/>
</dbReference>
<dbReference type="PANTHER" id="PTHR30050:SF2">
    <property type="entry name" value="CHROMOSOMAL REPLICATION INITIATOR PROTEIN DNAA"/>
    <property type="match status" value="1"/>
</dbReference>
<dbReference type="Pfam" id="PF00308">
    <property type="entry name" value="Bac_DnaA"/>
    <property type="match status" value="1"/>
</dbReference>
<dbReference type="Pfam" id="PF08299">
    <property type="entry name" value="Bac_DnaA_C"/>
    <property type="match status" value="1"/>
</dbReference>
<dbReference type="PRINTS" id="PR00051">
    <property type="entry name" value="DNAA"/>
</dbReference>
<dbReference type="SMART" id="SM00382">
    <property type="entry name" value="AAA"/>
    <property type="match status" value="1"/>
</dbReference>
<dbReference type="SMART" id="SM00760">
    <property type="entry name" value="Bac_DnaA_C"/>
    <property type="match status" value="1"/>
</dbReference>
<dbReference type="SUPFAM" id="SSF52540">
    <property type="entry name" value="P-loop containing nucleoside triphosphate hydrolases"/>
    <property type="match status" value="1"/>
</dbReference>
<dbReference type="SUPFAM" id="SSF48295">
    <property type="entry name" value="TrpR-like"/>
    <property type="match status" value="1"/>
</dbReference>
<dbReference type="PROSITE" id="PS01008">
    <property type="entry name" value="DNAA"/>
    <property type="match status" value="1"/>
</dbReference>
<evidence type="ECO:0000255" key="1">
    <source>
        <dbReference type="HAMAP-Rule" id="MF_00377"/>
    </source>
</evidence>
<evidence type="ECO:0000256" key="2">
    <source>
        <dbReference type="SAM" id="MobiDB-lite"/>
    </source>
</evidence>
<keyword id="KW-0067">ATP-binding</keyword>
<keyword id="KW-0963">Cytoplasm</keyword>
<keyword id="KW-0235">DNA replication</keyword>
<keyword id="KW-0238">DNA-binding</keyword>
<keyword id="KW-0446">Lipid-binding</keyword>
<keyword id="KW-0547">Nucleotide-binding</keyword>
<keyword id="KW-1185">Reference proteome</keyword>
<sequence length="546" mass="60676">MSDPQAALRASWKAVVSDLLAQSEQPNSDVPNFSHSQRLNLQLVEPIMIGDGYALIAAPHENAKTVIETELGEYITRALSQHMGRPCSLAVTIAAPPQPAPQEEPPAPAPQRPIQTEAPEHGMGHQTQAFQQPTQSTQPAPASQPETPNHHQPRSWEAAHSPASLDELAQHYSEQQSTAPSGYPEATGARIPREEPAHNPNREKSLNPKHTFENFVIGSSNRFANGAAVAVAENPARAYNPLFIWGGSGLGKTHLLHAAGNYAQVLHPGLRVKYVSSEEFTNDYINSLRDDRQESFKRRYRNLDILMVDDIQFLEGKESTQEEFFHTFNALHQANKQIILSSDRPPKQLTTLEDRLRTRFEGGLITDIQPPDLETRIAILMKKASADGTDVDRSVLELIASRFESSIRELEGALIRVSAYSSLVNEPISLEMAEIALHDLAPDSADRQITAAAIIEVTADYFNIDVDTLRGSGKKRAVAHARQLAMYLCRELTELSLPKIGDQFGGKDHTTVIYADRKIRKEMTENRNTYDEIQALTQRVKNHNQR</sequence>
<accession>C3PE72</accession>
<feature type="chain" id="PRO_1000189792" description="Chromosomal replication initiator protein DnaA">
    <location>
        <begin position="1"/>
        <end position="546"/>
    </location>
</feature>
<feature type="region of interest" description="Domain I, interacts with DnaA modulators" evidence="1">
    <location>
        <begin position="1"/>
        <end position="85"/>
    </location>
</feature>
<feature type="region of interest" description="Domain II" evidence="1">
    <location>
        <begin position="85"/>
        <end position="204"/>
    </location>
</feature>
<feature type="region of interest" description="Disordered" evidence="2">
    <location>
        <begin position="96"/>
        <end position="209"/>
    </location>
</feature>
<feature type="region of interest" description="Domain III, AAA+ region" evidence="1">
    <location>
        <begin position="205"/>
        <end position="421"/>
    </location>
</feature>
<feature type="region of interest" description="Domain IV, binds dsDNA" evidence="1">
    <location>
        <begin position="422"/>
        <end position="546"/>
    </location>
</feature>
<feature type="compositionally biased region" description="Pro residues" evidence="2">
    <location>
        <begin position="96"/>
        <end position="111"/>
    </location>
</feature>
<feature type="compositionally biased region" description="Low complexity" evidence="2">
    <location>
        <begin position="126"/>
        <end position="145"/>
    </location>
</feature>
<feature type="compositionally biased region" description="Basic and acidic residues" evidence="2">
    <location>
        <begin position="191"/>
        <end position="209"/>
    </location>
</feature>
<feature type="binding site" evidence="1">
    <location>
        <position position="249"/>
    </location>
    <ligand>
        <name>ATP</name>
        <dbReference type="ChEBI" id="CHEBI:30616"/>
    </ligand>
</feature>
<feature type="binding site" evidence="1">
    <location>
        <position position="251"/>
    </location>
    <ligand>
        <name>ATP</name>
        <dbReference type="ChEBI" id="CHEBI:30616"/>
    </ligand>
</feature>
<feature type="binding site" evidence="1">
    <location>
        <position position="252"/>
    </location>
    <ligand>
        <name>ATP</name>
        <dbReference type="ChEBI" id="CHEBI:30616"/>
    </ligand>
</feature>
<feature type="binding site" evidence="1">
    <location>
        <position position="253"/>
    </location>
    <ligand>
        <name>ATP</name>
        <dbReference type="ChEBI" id="CHEBI:30616"/>
    </ligand>
</feature>
<organism>
    <name type="scientific">Corynebacterium aurimucosum (strain ATCC 700975 / DSM 44827 / CIP 107346 / CN-1)</name>
    <name type="common">Corynebacterium nigricans</name>
    <dbReference type="NCBI Taxonomy" id="548476"/>
    <lineage>
        <taxon>Bacteria</taxon>
        <taxon>Bacillati</taxon>
        <taxon>Actinomycetota</taxon>
        <taxon>Actinomycetes</taxon>
        <taxon>Mycobacteriales</taxon>
        <taxon>Corynebacteriaceae</taxon>
        <taxon>Corynebacterium</taxon>
    </lineage>
</organism>